<name>CASP3_LOTJA</name>
<evidence type="ECO:0000250" key="1"/>
<evidence type="ECO:0000255" key="2"/>
<evidence type="ECO:0000256" key="3">
    <source>
        <dbReference type="SAM" id="MobiDB-lite"/>
    </source>
</evidence>
<evidence type="ECO:0000305" key="4"/>
<organism>
    <name type="scientific">Lotus japonicus</name>
    <name type="common">Lotus corniculatus var. japonicus</name>
    <dbReference type="NCBI Taxonomy" id="34305"/>
    <lineage>
        <taxon>Eukaryota</taxon>
        <taxon>Viridiplantae</taxon>
        <taxon>Streptophyta</taxon>
        <taxon>Embryophyta</taxon>
        <taxon>Tracheophyta</taxon>
        <taxon>Spermatophyta</taxon>
        <taxon>Magnoliopsida</taxon>
        <taxon>eudicotyledons</taxon>
        <taxon>Gunneridae</taxon>
        <taxon>Pentapetalae</taxon>
        <taxon>rosids</taxon>
        <taxon>fabids</taxon>
        <taxon>Fabales</taxon>
        <taxon>Fabaceae</taxon>
        <taxon>Papilionoideae</taxon>
        <taxon>50 kb inversion clade</taxon>
        <taxon>NPAAA clade</taxon>
        <taxon>Hologalegina</taxon>
        <taxon>robinioid clade</taxon>
        <taxon>Loteae</taxon>
        <taxon>Lotus</taxon>
    </lineage>
</organism>
<protein>
    <recommendedName>
        <fullName>Casparian strip membrane protein 3</fullName>
        <shortName>LjCASP3</shortName>
    </recommendedName>
</protein>
<keyword id="KW-1003">Cell membrane</keyword>
<keyword id="KW-0961">Cell wall biogenesis/degradation</keyword>
<keyword id="KW-0325">Glycoprotein</keyword>
<keyword id="KW-0472">Membrane</keyword>
<keyword id="KW-0812">Transmembrane</keyword>
<keyword id="KW-1133">Transmembrane helix</keyword>
<sequence>MDPGREDEVPLAATSPESRRTRSNGRGKATVGDAPPPAETVVSTKAAPLPTGGWKKGIAILDFILRLGAIGAAMGASILMGTNEQILPFFTQFLQFHAQWDDFPVFKLFVVLNALAGGFLILSLPLSIVCIVRPLAVGPRFLLLITDLVNMATVIAAASAAAAIVYVAHNGSQDANWIAICQQFTDFCQGTSEAVVVSFVAAVFLVCLIVVSTLALKRT</sequence>
<dbReference type="EMBL" id="GO006025">
    <property type="status" value="NOT_ANNOTATED_CDS"/>
    <property type="molecule type" value="mRNA"/>
</dbReference>
<dbReference type="EMBL" id="BT139556">
    <property type="protein sequence ID" value="AFK39351.1"/>
    <property type="molecule type" value="mRNA"/>
</dbReference>
<dbReference type="EMBL" id="BT148423">
    <property type="protein sequence ID" value="AFK48217.1"/>
    <property type="molecule type" value="mRNA"/>
</dbReference>
<dbReference type="RefSeq" id="NP_001414789.1">
    <property type="nucleotide sequence ID" value="NM_001427860.1"/>
</dbReference>
<dbReference type="GeneID" id="130748073"/>
<dbReference type="OrthoDB" id="753675at2759"/>
<dbReference type="GO" id="GO:0005886">
    <property type="term" value="C:plasma membrane"/>
    <property type="evidence" value="ECO:0007669"/>
    <property type="project" value="UniProtKB-SubCell"/>
</dbReference>
<dbReference type="GO" id="GO:0071555">
    <property type="term" value="P:cell wall organization"/>
    <property type="evidence" value="ECO:0007669"/>
    <property type="project" value="UniProtKB-KW"/>
</dbReference>
<dbReference type="InterPro" id="IPR006459">
    <property type="entry name" value="CASP/CASPL"/>
</dbReference>
<dbReference type="InterPro" id="IPR006702">
    <property type="entry name" value="CASP_dom"/>
</dbReference>
<dbReference type="InterPro" id="IPR044173">
    <property type="entry name" value="CASPL"/>
</dbReference>
<dbReference type="NCBIfam" id="TIGR01569">
    <property type="entry name" value="A_tha_TIGR01569"/>
    <property type="match status" value="1"/>
</dbReference>
<dbReference type="PANTHER" id="PTHR36488:SF11">
    <property type="entry name" value="CASP-LIKE PROTEIN"/>
    <property type="match status" value="1"/>
</dbReference>
<dbReference type="PANTHER" id="PTHR36488">
    <property type="entry name" value="CASP-LIKE PROTEIN 1U1"/>
    <property type="match status" value="1"/>
</dbReference>
<dbReference type="Pfam" id="PF04535">
    <property type="entry name" value="CASP_dom"/>
    <property type="match status" value="1"/>
</dbReference>
<accession>P0DI56</accession>
<accession>I3SGF9</accession>
<accession>I3T6S5</accession>
<proteinExistence type="evidence at transcript level"/>
<comment type="function">
    <text evidence="1">Regulates membrane-cell wall junctions and localized cell wall deposition. Required for establishment of the Casparian strip membrane domain (CSD) and the subsequent formation of Casparian strips, a cell wall modification of the root endodermis that determines an apoplastic barrier between the intraorganismal apoplasm and the extraorganismal apoplasm and prevents lateral diffusion (By similarity).</text>
</comment>
<comment type="subunit">
    <text evidence="1">Homodimer and heterodimers.</text>
</comment>
<comment type="subcellular location">
    <subcellularLocation>
        <location evidence="1">Cell membrane</location>
        <topology evidence="1">Multi-pass membrane protein</topology>
    </subcellularLocation>
    <text evidence="1">Very restricted localization following a belt shape within the plasma membrane which coincides with the position of the Casparian strip membrane domain in the root endodermis.</text>
</comment>
<comment type="similarity">
    <text evidence="4">Belongs to the Casparian strip membrane proteins (CASP) family.</text>
</comment>
<reference key="1">
    <citation type="submission" date="2009-02" db="EMBL/GenBank/DDBJ databases">
        <title>Construction and analysis of normalized cDNA library from stressed or untreated aerial and underground tissues of Lotus japonicus.</title>
        <authorList>
            <person name="Chan A.P."/>
            <person name="Cheung F."/>
            <person name="Xiao Y."/>
            <person name="Town C.D."/>
        </authorList>
    </citation>
    <scope>NUCLEOTIDE SEQUENCE [LARGE SCALE MRNA]</scope>
    <source>
        <strain>cv. Gifu</strain>
        <tissue>Cotyledon</tissue>
        <tissue>Root</tissue>
        <tissue>Shoot</tissue>
    </source>
</reference>
<reference key="2">
    <citation type="submission" date="2012-05" db="EMBL/GenBank/DDBJ databases">
        <authorList>
            <person name="Krishnakumar V."/>
            <person name="Cheung F."/>
            <person name="Xiao Y."/>
            <person name="Chan A."/>
            <person name="Moskal W.A."/>
            <person name="Town C.D."/>
        </authorList>
    </citation>
    <scope>NUCLEOTIDE SEQUENCE [LARGE SCALE MRNA]</scope>
</reference>
<reference key="3">
    <citation type="journal article" date="2014" name="Plant Physiol.">
        <title>Functional and evolutionary analysis of the CASPARIAN STRIP MEMBRANE DOMAIN PROTEIN family.</title>
        <authorList>
            <person name="Roppolo D."/>
            <person name="Boeckmann B."/>
            <person name="Pfister A."/>
            <person name="Boutet E."/>
            <person name="Rubio M.C."/>
            <person name="Denervaud-Tendon V."/>
            <person name="Vermeer J.E."/>
            <person name="Gheyselinck J."/>
            <person name="Xenarios I."/>
            <person name="Geldner N."/>
        </authorList>
    </citation>
    <scope>GENE FAMILY</scope>
    <scope>NOMENCLATURE</scope>
</reference>
<feature type="chain" id="PRO_0000417775" description="Casparian strip membrane protein 3">
    <location>
        <begin position="1"/>
        <end position="219"/>
    </location>
</feature>
<feature type="topological domain" description="Cytoplasmic" evidence="2">
    <location>
        <begin position="1"/>
        <end position="57"/>
    </location>
</feature>
<feature type="transmembrane region" description="Helical" evidence="2">
    <location>
        <begin position="58"/>
        <end position="78"/>
    </location>
</feature>
<feature type="topological domain" description="Extracellular" evidence="2">
    <location>
        <begin position="79"/>
        <end position="108"/>
    </location>
</feature>
<feature type="transmembrane region" description="Helical" evidence="2">
    <location>
        <begin position="109"/>
        <end position="129"/>
    </location>
</feature>
<feature type="topological domain" description="Cytoplasmic" evidence="2">
    <location>
        <begin position="130"/>
        <end position="147"/>
    </location>
</feature>
<feature type="transmembrane region" description="Helical" evidence="2">
    <location>
        <begin position="148"/>
        <end position="168"/>
    </location>
</feature>
<feature type="topological domain" description="Extracellular" evidence="2">
    <location>
        <begin position="169"/>
        <end position="193"/>
    </location>
</feature>
<feature type="transmembrane region" description="Helical" evidence="2">
    <location>
        <begin position="194"/>
        <end position="214"/>
    </location>
</feature>
<feature type="topological domain" description="Cytoplasmic" evidence="2">
    <location>
        <begin position="215"/>
        <end position="219"/>
    </location>
</feature>
<feature type="region of interest" description="Disordered" evidence="3">
    <location>
        <begin position="1"/>
        <end position="43"/>
    </location>
</feature>
<feature type="glycosylation site" description="N-linked (GlcNAc...) asparagine" evidence="2">
    <location>
        <position position="170"/>
    </location>
</feature>
<feature type="sequence conflict" description="In Ref. 2; AFK48217." evidence="4" ref="2">
    <original>C</original>
    <variation>F</variation>
    <location>
        <position position="130"/>
    </location>
</feature>